<feature type="chain" id="PRO_1000053478" description="Phosphatidylglycerol--prolipoprotein diacylglyceryl transferase">
    <location>
        <begin position="1"/>
        <end position="271"/>
    </location>
</feature>
<feature type="transmembrane region" description="Helical" evidence="1">
    <location>
        <begin position="10"/>
        <end position="30"/>
    </location>
</feature>
<feature type="transmembrane region" description="Helical" evidence="1">
    <location>
        <begin position="56"/>
        <end position="76"/>
    </location>
</feature>
<feature type="transmembrane region" description="Helical" evidence="1">
    <location>
        <begin position="92"/>
        <end position="112"/>
    </location>
</feature>
<feature type="transmembrane region" description="Helical" evidence="1">
    <location>
        <begin position="120"/>
        <end position="140"/>
    </location>
</feature>
<feature type="transmembrane region" description="Helical" evidence="1">
    <location>
        <begin position="174"/>
        <end position="194"/>
    </location>
</feature>
<feature type="transmembrane region" description="Helical" evidence="1">
    <location>
        <begin position="202"/>
        <end position="222"/>
    </location>
</feature>
<feature type="transmembrane region" description="Helical" evidence="1">
    <location>
        <begin position="237"/>
        <end position="257"/>
    </location>
</feature>
<feature type="binding site" evidence="1">
    <location>
        <position position="139"/>
    </location>
    <ligand>
        <name>a 1,2-diacyl-sn-glycero-3-phospho-(1'-sn-glycerol)</name>
        <dbReference type="ChEBI" id="CHEBI:64716"/>
    </ligand>
</feature>
<organism>
    <name type="scientific">Pseudomonas fluorescens (strain Pf0-1)</name>
    <dbReference type="NCBI Taxonomy" id="205922"/>
    <lineage>
        <taxon>Bacteria</taxon>
        <taxon>Pseudomonadati</taxon>
        <taxon>Pseudomonadota</taxon>
        <taxon>Gammaproteobacteria</taxon>
        <taxon>Pseudomonadales</taxon>
        <taxon>Pseudomonadaceae</taxon>
        <taxon>Pseudomonas</taxon>
    </lineage>
</organism>
<keyword id="KW-0997">Cell inner membrane</keyword>
<keyword id="KW-1003">Cell membrane</keyword>
<keyword id="KW-0472">Membrane</keyword>
<keyword id="KW-0808">Transferase</keyword>
<keyword id="KW-0812">Transmembrane</keyword>
<keyword id="KW-1133">Transmembrane helix</keyword>
<accession>Q3K543</accession>
<protein>
    <recommendedName>
        <fullName evidence="1">Phosphatidylglycerol--prolipoprotein diacylglyceryl transferase</fullName>
        <ecNumber evidence="1">2.5.1.145</ecNumber>
    </recommendedName>
</protein>
<comment type="function">
    <text evidence="1">Catalyzes the transfer of the diacylglyceryl group from phosphatidylglycerol to the sulfhydryl group of the N-terminal cysteine of a prolipoprotein, the first step in the formation of mature lipoproteins.</text>
</comment>
<comment type="catalytic activity">
    <reaction evidence="1">
        <text>L-cysteinyl-[prolipoprotein] + a 1,2-diacyl-sn-glycero-3-phospho-(1'-sn-glycerol) = an S-1,2-diacyl-sn-glyceryl-L-cysteinyl-[prolipoprotein] + sn-glycerol 1-phosphate + H(+)</text>
        <dbReference type="Rhea" id="RHEA:56712"/>
        <dbReference type="Rhea" id="RHEA-COMP:14679"/>
        <dbReference type="Rhea" id="RHEA-COMP:14680"/>
        <dbReference type="ChEBI" id="CHEBI:15378"/>
        <dbReference type="ChEBI" id="CHEBI:29950"/>
        <dbReference type="ChEBI" id="CHEBI:57685"/>
        <dbReference type="ChEBI" id="CHEBI:64716"/>
        <dbReference type="ChEBI" id="CHEBI:140658"/>
        <dbReference type="EC" id="2.5.1.145"/>
    </reaction>
</comment>
<comment type="pathway">
    <text evidence="1">Protein modification; lipoprotein biosynthesis (diacylglyceryl transfer).</text>
</comment>
<comment type="subcellular location">
    <subcellularLocation>
        <location evidence="1">Cell inner membrane</location>
        <topology evidence="1">Multi-pass membrane protein</topology>
    </subcellularLocation>
</comment>
<comment type="similarity">
    <text evidence="1">Belongs to the Lgt family.</text>
</comment>
<reference key="1">
    <citation type="journal article" date="2009" name="Genome Biol.">
        <title>Genomic and genetic analyses of diversity and plant interactions of Pseudomonas fluorescens.</title>
        <authorList>
            <person name="Silby M.W."/>
            <person name="Cerdeno-Tarraga A.M."/>
            <person name="Vernikos G.S."/>
            <person name="Giddens S.R."/>
            <person name="Jackson R.W."/>
            <person name="Preston G.M."/>
            <person name="Zhang X.-X."/>
            <person name="Moon C.D."/>
            <person name="Gehrig S.M."/>
            <person name="Godfrey S.A.C."/>
            <person name="Knight C.G."/>
            <person name="Malone J.G."/>
            <person name="Robinson Z."/>
            <person name="Spiers A.J."/>
            <person name="Harris S."/>
            <person name="Challis G.L."/>
            <person name="Yaxley A.M."/>
            <person name="Harris D."/>
            <person name="Seeger K."/>
            <person name="Murphy L."/>
            <person name="Rutter S."/>
            <person name="Squares R."/>
            <person name="Quail M.A."/>
            <person name="Saunders E."/>
            <person name="Mavromatis K."/>
            <person name="Brettin T.S."/>
            <person name="Bentley S.D."/>
            <person name="Hothersall J."/>
            <person name="Stephens E."/>
            <person name="Thomas C.M."/>
            <person name="Parkhill J."/>
            <person name="Levy S.B."/>
            <person name="Rainey P.B."/>
            <person name="Thomson N.R."/>
        </authorList>
    </citation>
    <scope>NUCLEOTIDE SEQUENCE [LARGE SCALE GENOMIC DNA]</scope>
    <source>
        <strain>Pf0-1</strain>
    </source>
</reference>
<gene>
    <name evidence="1" type="primary">lgt</name>
    <name type="ordered locus">Pfl01_5374</name>
</gene>
<sequence>MLPYPQIDPVALAIGPLKIHWYGLMYLVGIGGAWLLASRRLNRFDPTWTKEKLSDLVFWLSMGVIVGGRLGYVLFYDLSAYIANPTLIFEVWKGGMSFHGGFIGVMLAALWFGKRNGKSFFQLMDFVAPMVPIGLGAGRIGNFINAELWGKATDVPWAMVFPPFSDPAQLPRHPSQLYQFALEGVALFLILWLFSRKPRPTMAVSGMFALFYGIFRFIVEFVRVPDAQLGYLAWNWLTMGQVLCVPMIIGGLFLIWLAYHRAPAAPVAPTA</sequence>
<evidence type="ECO:0000255" key="1">
    <source>
        <dbReference type="HAMAP-Rule" id="MF_01147"/>
    </source>
</evidence>
<dbReference type="EC" id="2.5.1.145" evidence="1"/>
<dbReference type="EMBL" id="CP000094">
    <property type="protein sequence ID" value="ABA77111.1"/>
    <property type="molecule type" value="Genomic_DNA"/>
</dbReference>
<dbReference type="RefSeq" id="WP_007953463.1">
    <property type="nucleotide sequence ID" value="NC_007492.2"/>
</dbReference>
<dbReference type="SMR" id="Q3K543"/>
<dbReference type="KEGG" id="pfo:Pfl01_5374"/>
<dbReference type="eggNOG" id="COG0682">
    <property type="taxonomic scope" value="Bacteria"/>
</dbReference>
<dbReference type="HOGENOM" id="CLU_013386_1_0_6"/>
<dbReference type="UniPathway" id="UPA00664"/>
<dbReference type="Proteomes" id="UP000002704">
    <property type="component" value="Chromosome"/>
</dbReference>
<dbReference type="GO" id="GO:0005886">
    <property type="term" value="C:plasma membrane"/>
    <property type="evidence" value="ECO:0007669"/>
    <property type="project" value="UniProtKB-SubCell"/>
</dbReference>
<dbReference type="GO" id="GO:0008961">
    <property type="term" value="F:phosphatidylglycerol-prolipoprotein diacylglyceryl transferase activity"/>
    <property type="evidence" value="ECO:0007669"/>
    <property type="project" value="UniProtKB-UniRule"/>
</dbReference>
<dbReference type="GO" id="GO:0042158">
    <property type="term" value="P:lipoprotein biosynthetic process"/>
    <property type="evidence" value="ECO:0007669"/>
    <property type="project" value="UniProtKB-UniRule"/>
</dbReference>
<dbReference type="HAMAP" id="MF_01147">
    <property type="entry name" value="Lgt"/>
    <property type="match status" value="1"/>
</dbReference>
<dbReference type="InterPro" id="IPR001640">
    <property type="entry name" value="Lgt"/>
</dbReference>
<dbReference type="NCBIfam" id="TIGR00544">
    <property type="entry name" value="lgt"/>
    <property type="match status" value="1"/>
</dbReference>
<dbReference type="PANTHER" id="PTHR30589:SF0">
    <property type="entry name" value="PHOSPHATIDYLGLYCEROL--PROLIPOPROTEIN DIACYLGLYCERYL TRANSFERASE"/>
    <property type="match status" value="1"/>
</dbReference>
<dbReference type="PANTHER" id="PTHR30589">
    <property type="entry name" value="PROLIPOPROTEIN DIACYLGLYCERYL TRANSFERASE"/>
    <property type="match status" value="1"/>
</dbReference>
<dbReference type="Pfam" id="PF01790">
    <property type="entry name" value="LGT"/>
    <property type="match status" value="1"/>
</dbReference>
<dbReference type="PROSITE" id="PS01311">
    <property type="entry name" value="LGT"/>
    <property type="match status" value="1"/>
</dbReference>
<name>LGT_PSEPF</name>
<proteinExistence type="inferred from homology"/>